<proteinExistence type="inferred from homology"/>
<dbReference type="EC" id="2.4.2.1" evidence="2"/>
<dbReference type="EMBL" id="BA000031">
    <property type="protein sequence ID" value="BAC60696.1"/>
    <property type="molecule type" value="Genomic_DNA"/>
</dbReference>
<dbReference type="RefSeq" id="NP_798812.1">
    <property type="nucleotide sequence ID" value="NC_004603.1"/>
</dbReference>
<dbReference type="SMR" id="Q87M25"/>
<dbReference type="GeneID" id="1189946"/>
<dbReference type="KEGG" id="vpa:VP2433"/>
<dbReference type="PATRIC" id="fig|223926.6.peg.2334"/>
<dbReference type="eggNOG" id="COG0813">
    <property type="taxonomic scope" value="Bacteria"/>
</dbReference>
<dbReference type="HOGENOM" id="CLU_068457_2_0_6"/>
<dbReference type="Proteomes" id="UP000002493">
    <property type="component" value="Chromosome 1"/>
</dbReference>
<dbReference type="GO" id="GO:0005829">
    <property type="term" value="C:cytosol"/>
    <property type="evidence" value="ECO:0007669"/>
    <property type="project" value="TreeGrafter"/>
</dbReference>
<dbReference type="GO" id="GO:0004731">
    <property type="term" value="F:purine-nucleoside phosphorylase activity"/>
    <property type="evidence" value="ECO:0007669"/>
    <property type="project" value="UniProtKB-UniRule"/>
</dbReference>
<dbReference type="GO" id="GO:0006152">
    <property type="term" value="P:purine nucleoside catabolic process"/>
    <property type="evidence" value="ECO:0007669"/>
    <property type="project" value="TreeGrafter"/>
</dbReference>
<dbReference type="CDD" id="cd09006">
    <property type="entry name" value="PNP_EcPNPI-like"/>
    <property type="match status" value="1"/>
</dbReference>
<dbReference type="FunFam" id="3.40.50.1580:FF:000002">
    <property type="entry name" value="Purine nucleoside phosphorylase DeoD-type"/>
    <property type="match status" value="1"/>
</dbReference>
<dbReference type="Gene3D" id="3.40.50.1580">
    <property type="entry name" value="Nucleoside phosphorylase domain"/>
    <property type="match status" value="1"/>
</dbReference>
<dbReference type="HAMAP" id="MF_01627">
    <property type="entry name" value="Pur_nucleosid_phosp"/>
    <property type="match status" value="1"/>
</dbReference>
<dbReference type="InterPro" id="IPR004402">
    <property type="entry name" value="DeoD-type"/>
</dbReference>
<dbReference type="InterPro" id="IPR018016">
    <property type="entry name" value="Nucleoside_phosphorylase_CS"/>
</dbReference>
<dbReference type="InterPro" id="IPR000845">
    <property type="entry name" value="Nucleoside_phosphorylase_d"/>
</dbReference>
<dbReference type="InterPro" id="IPR035994">
    <property type="entry name" value="Nucleoside_phosphorylase_sf"/>
</dbReference>
<dbReference type="NCBIfam" id="TIGR00107">
    <property type="entry name" value="deoD"/>
    <property type="match status" value="1"/>
</dbReference>
<dbReference type="NCBIfam" id="NF004489">
    <property type="entry name" value="PRK05819.1"/>
    <property type="match status" value="1"/>
</dbReference>
<dbReference type="NCBIfam" id="NF009914">
    <property type="entry name" value="PRK13374.1"/>
    <property type="match status" value="1"/>
</dbReference>
<dbReference type="PANTHER" id="PTHR43691:SF2">
    <property type="entry name" value="PURINE NUCLEOSIDE PHOSPHORYLASE DEOD-TYPE"/>
    <property type="match status" value="1"/>
</dbReference>
<dbReference type="PANTHER" id="PTHR43691">
    <property type="entry name" value="URIDINE PHOSPHORYLASE"/>
    <property type="match status" value="1"/>
</dbReference>
<dbReference type="Pfam" id="PF01048">
    <property type="entry name" value="PNP_UDP_1"/>
    <property type="match status" value="1"/>
</dbReference>
<dbReference type="SUPFAM" id="SSF53167">
    <property type="entry name" value="Purine and uridine phosphorylases"/>
    <property type="match status" value="1"/>
</dbReference>
<dbReference type="PROSITE" id="PS01232">
    <property type="entry name" value="PNP_UDP_1"/>
    <property type="match status" value="1"/>
</dbReference>
<comment type="function">
    <text evidence="2">Catalyzes the reversible phosphorolytic breakdown of the N-glycosidic bond in the beta-(deoxy)ribonucleoside molecules, with the formation of the corresponding free purine bases and pentose-1-phosphate.</text>
</comment>
<comment type="catalytic activity">
    <reaction evidence="2">
        <text>a purine D-ribonucleoside + phosphate = a purine nucleobase + alpha-D-ribose 1-phosphate</text>
        <dbReference type="Rhea" id="RHEA:19805"/>
        <dbReference type="ChEBI" id="CHEBI:26386"/>
        <dbReference type="ChEBI" id="CHEBI:43474"/>
        <dbReference type="ChEBI" id="CHEBI:57720"/>
        <dbReference type="ChEBI" id="CHEBI:142355"/>
        <dbReference type="EC" id="2.4.2.1"/>
    </reaction>
</comment>
<comment type="catalytic activity">
    <reaction evidence="2">
        <text>a purine 2'-deoxy-D-ribonucleoside + phosphate = a purine nucleobase + 2-deoxy-alpha-D-ribose 1-phosphate</text>
        <dbReference type="Rhea" id="RHEA:36431"/>
        <dbReference type="ChEBI" id="CHEBI:26386"/>
        <dbReference type="ChEBI" id="CHEBI:43474"/>
        <dbReference type="ChEBI" id="CHEBI:57259"/>
        <dbReference type="ChEBI" id="CHEBI:142361"/>
        <dbReference type="EC" id="2.4.2.1"/>
    </reaction>
</comment>
<comment type="subunit">
    <text evidence="2">Homohexamer; trimer of homodimers.</text>
</comment>
<comment type="similarity">
    <text evidence="2">Belongs to the PNP/UDP phosphorylase family.</text>
</comment>
<sequence>MATPHINAEMGAFADVVLMPGDPLRAKYIAETFLEDVVQVCDVRNMFGYTGTYKGRKISVMGHGMGIPSCSIYATELIKDFGVKKIIRVGSCGAVNEDIKVRDVVIGMGACTDSKVNRIRFKGHDFAAIADYKMVRAAEDAAKARGIDVKVGNLFSAELFYTPDPEMFDVMDKYGIVGVEMEAAGIYGVAAEYGAKALTICTVSDHIKTGEQTTSDERQTTFNDMMLIALDSVLLGDAE</sequence>
<gene>
    <name evidence="2" type="primary">deoD1</name>
    <name type="ordered locus">VP2433</name>
</gene>
<feature type="chain" id="PRO_0000063174" description="Purine nucleoside phosphorylase DeoD-type 1">
    <location>
        <begin position="1"/>
        <end position="239"/>
    </location>
</feature>
<feature type="active site" description="Proton donor" evidence="2">
    <location>
        <position position="205"/>
    </location>
</feature>
<feature type="binding site" evidence="1">
    <location>
        <position position="5"/>
    </location>
    <ligand>
        <name>a purine D-ribonucleoside</name>
        <dbReference type="ChEBI" id="CHEBI:142355"/>
        <note>ligand shared between dimeric partners</note>
    </ligand>
</feature>
<feature type="binding site" description="in other chain" evidence="1">
    <location>
        <position position="21"/>
    </location>
    <ligand>
        <name>phosphate</name>
        <dbReference type="ChEBI" id="CHEBI:43474"/>
        <note>ligand shared between dimeric partners</note>
    </ligand>
</feature>
<feature type="binding site" description="in other chain" evidence="1">
    <location>
        <position position="25"/>
    </location>
    <ligand>
        <name>phosphate</name>
        <dbReference type="ChEBI" id="CHEBI:43474"/>
        <note>ligand shared between dimeric partners</note>
    </ligand>
</feature>
<feature type="binding site" evidence="1">
    <location>
        <position position="44"/>
    </location>
    <ligand>
        <name>phosphate</name>
        <dbReference type="ChEBI" id="CHEBI:43474"/>
        <note>ligand shared between dimeric partners</note>
    </ligand>
</feature>
<feature type="binding site" description="in other chain" evidence="1">
    <location>
        <begin position="88"/>
        <end position="91"/>
    </location>
    <ligand>
        <name>phosphate</name>
        <dbReference type="ChEBI" id="CHEBI:43474"/>
        <note>ligand shared between dimeric partners</note>
    </ligand>
</feature>
<feature type="binding site" description="in other chain" evidence="1">
    <location>
        <begin position="180"/>
        <end position="182"/>
    </location>
    <ligand>
        <name>a purine D-ribonucleoside</name>
        <dbReference type="ChEBI" id="CHEBI:142355"/>
        <note>ligand shared between dimeric partners</note>
    </ligand>
</feature>
<feature type="binding site" description="in other chain" evidence="1">
    <location>
        <begin position="204"/>
        <end position="205"/>
    </location>
    <ligand>
        <name>a purine D-ribonucleoside</name>
        <dbReference type="ChEBI" id="CHEBI:142355"/>
        <note>ligand shared between dimeric partners</note>
    </ligand>
</feature>
<feature type="site" description="Important for catalytic activity" evidence="2">
    <location>
        <position position="218"/>
    </location>
</feature>
<keyword id="KW-0328">Glycosyltransferase</keyword>
<keyword id="KW-0808">Transferase</keyword>
<reference key="1">
    <citation type="journal article" date="2003" name="Lancet">
        <title>Genome sequence of Vibrio parahaemolyticus: a pathogenic mechanism distinct from that of V. cholerae.</title>
        <authorList>
            <person name="Makino K."/>
            <person name="Oshima K."/>
            <person name="Kurokawa K."/>
            <person name="Yokoyama K."/>
            <person name="Uda T."/>
            <person name="Tagomori K."/>
            <person name="Iijima Y."/>
            <person name="Najima M."/>
            <person name="Nakano M."/>
            <person name="Yamashita A."/>
            <person name="Kubota Y."/>
            <person name="Kimura S."/>
            <person name="Yasunaga T."/>
            <person name="Honda T."/>
            <person name="Shinagawa H."/>
            <person name="Hattori M."/>
            <person name="Iida T."/>
        </authorList>
    </citation>
    <scope>NUCLEOTIDE SEQUENCE [LARGE SCALE GENOMIC DNA]</scope>
    <source>
        <strain>RIMD 2210633</strain>
    </source>
</reference>
<evidence type="ECO:0000250" key="1">
    <source>
        <dbReference type="UniProtKB" id="P50389"/>
    </source>
</evidence>
<evidence type="ECO:0000255" key="2">
    <source>
        <dbReference type="HAMAP-Rule" id="MF_01627"/>
    </source>
</evidence>
<name>DEOD1_VIBPA</name>
<protein>
    <recommendedName>
        <fullName evidence="2">Purine nucleoside phosphorylase DeoD-type 1</fullName>
        <shortName evidence="2">PNP 1</shortName>
        <ecNumber evidence="2">2.4.2.1</ecNumber>
    </recommendedName>
</protein>
<accession>Q87M25</accession>
<organism>
    <name type="scientific">Vibrio parahaemolyticus serotype O3:K6 (strain RIMD 2210633)</name>
    <dbReference type="NCBI Taxonomy" id="223926"/>
    <lineage>
        <taxon>Bacteria</taxon>
        <taxon>Pseudomonadati</taxon>
        <taxon>Pseudomonadota</taxon>
        <taxon>Gammaproteobacteria</taxon>
        <taxon>Vibrionales</taxon>
        <taxon>Vibrionaceae</taxon>
        <taxon>Vibrio</taxon>
    </lineage>
</organism>